<sequence>MATTKSVLVLIFMILATTSSTFATLGEMVTVLSIDGGGIKGIIPGIILEFLEGQLQKMDNNADARLADYFDVIGGTSTGGLLTAMITTPNENNRPFAAAKDIVPFYFQHGPHIFNSSTGQFFGPKYDGKYLMQVLQEKLGETRVHQALTEVAISSFDIKTNKPVIFTKSNLAKSPELDAKMSDICYSTAAAPTYFPPHYFATNTSNGDKYEFNLVDGAVATVADPALLSVSVATRRAEEDPAFASIRSLNYKQLLLLSLGTGTNSEFDKTHTAQETAKWGALQWMLVIQQMTEAASSYMTDYYLSTVFQDLHSQNNYLRVQENALTGTTTKADDASEANMELLVQVGENLLKKPVSKDNPETYEEALKRFAKLLSDRKKFRANKASY</sequence>
<reference key="1">
    <citation type="journal article" date="2006" name="FEBS J.">
        <title>Patatins, Kunitz protease inhibitors and other major proteins in tuber of potato cv. Kuras.</title>
        <authorList>
            <person name="Bauw G."/>
            <person name="Nielsen H.V."/>
            <person name="Emmersen J."/>
            <person name="Nielsen K.L."/>
            <person name="Joergensen M."/>
            <person name="Welinder K.G."/>
        </authorList>
    </citation>
    <scope>NUCLEOTIDE SEQUENCE [MRNA]</scope>
    <scope>PROTEIN SEQUENCE OF 24-40; 66-100; 126-180; 236-247; 253-278 AND 320-372</scope>
    <scope>TISSUE SPECIFICITY</scope>
    <scope>IDENTIFICATION BY MASS SPECTROMETRY</scope>
    <source>
        <strain>cv. Kuras</strain>
        <tissue>Tuber</tissue>
    </source>
</reference>
<reference key="2">
    <citation type="journal article" date="2006" name="Genetics">
        <title>Structural diversity and differential transcription of the patatin multicopy gene family during potato tuber development.</title>
        <authorList>
            <person name="Stupar R.M."/>
            <person name="Beaubien K.A."/>
            <person name="Jin W."/>
            <person name="Song J."/>
            <person name="Lee M.-K."/>
            <person name="Wu C."/>
            <person name="Zhang H.-B."/>
            <person name="Han B."/>
            <person name="Jiang J."/>
        </authorList>
    </citation>
    <scope>NUCLEOTIDE SEQUENCE [MRNA]</scope>
    <scope>DEVELOPMENTAL STAGE</scope>
    <scope>TISSUE SPECIFICITY</scope>
    <source>
        <strain>cv. Kennebec</strain>
    </source>
</reference>
<accession>Q3YJT5</accession>
<keyword id="KW-0903">Direct protein sequencing</keyword>
<keyword id="KW-0325">Glycoprotein</keyword>
<keyword id="KW-0378">Hydrolase</keyword>
<keyword id="KW-0442">Lipid degradation</keyword>
<keyword id="KW-0443">Lipid metabolism</keyword>
<keyword id="KW-0611">Plant defense</keyword>
<keyword id="KW-1185">Reference proteome</keyword>
<keyword id="KW-0732">Signal</keyword>
<keyword id="KW-0758">Storage protein</keyword>
<keyword id="KW-0926">Vacuole</keyword>
<feature type="signal peptide" evidence="5">
    <location>
        <begin position="1"/>
        <end position="23"/>
    </location>
</feature>
<feature type="chain" id="PRO_0000296691" description="Patatin-05">
    <location>
        <begin position="24"/>
        <end position="387"/>
    </location>
</feature>
<feature type="domain" description="PNPLA" evidence="3">
    <location>
        <begin position="32"/>
        <end position="230"/>
    </location>
</feature>
<feature type="short sequence motif" description="GXGXXG" evidence="3">
    <location>
        <begin position="36"/>
        <end position="41"/>
    </location>
</feature>
<feature type="short sequence motif" description="GXSXG" evidence="3">
    <location>
        <begin position="75"/>
        <end position="79"/>
    </location>
</feature>
<feature type="short sequence motif" description="DGA/G" evidence="3">
    <location>
        <begin position="216"/>
        <end position="218"/>
    </location>
</feature>
<feature type="active site" description="Nucleophile" evidence="3">
    <location>
        <position position="77"/>
    </location>
</feature>
<feature type="active site" description="Proton acceptor" evidence="3">
    <location>
        <position position="216"/>
    </location>
</feature>
<feature type="glycosylation site" description="N-linked (GlcNAc...) asparagine" evidence="2">
    <location>
        <position position="115"/>
    </location>
</feature>
<feature type="glycosylation site" description="N-linked (GlcNAc...) asparagine" evidence="2">
    <location>
        <position position="203"/>
    </location>
</feature>
<proteinExistence type="evidence at protein level"/>
<dbReference type="EC" id="3.1.1.-"/>
<dbReference type="EMBL" id="DQ114415">
    <property type="protein sequence ID" value="AAZ75956.1"/>
    <property type="molecule type" value="mRNA"/>
</dbReference>
<dbReference type="EMBL" id="DQ274492">
    <property type="protein sequence ID" value="ABC55692.1"/>
    <property type="molecule type" value="mRNA"/>
</dbReference>
<dbReference type="SMR" id="Q3YJT5"/>
<dbReference type="GlyCosmos" id="Q3YJT5">
    <property type="glycosylation" value="2 sites, No reported glycans"/>
</dbReference>
<dbReference type="PaxDb" id="4113-PGSC0003DMT400022567"/>
<dbReference type="eggNOG" id="KOG0513">
    <property type="taxonomic scope" value="Eukaryota"/>
</dbReference>
<dbReference type="InParanoid" id="Q3YJT5"/>
<dbReference type="Proteomes" id="UP000011115">
    <property type="component" value="Unassembled WGS sequence"/>
</dbReference>
<dbReference type="ExpressionAtlas" id="Q3YJT5">
    <property type="expression patterns" value="baseline and differential"/>
</dbReference>
<dbReference type="GO" id="GO:0005773">
    <property type="term" value="C:vacuole"/>
    <property type="evidence" value="ECO:0007669"/>
    <property type="project" value="UniProtKB-SubCell"/>
</dbReference>
<dbReference type="GO" id="GO:0047372">
    <property type="term" value="F:monoacylglycerol lipase activity"/>
    <property type="evidence" value="ECO:0000318"/>
    <property type="project" value="GO_Central"/>
</dbReference>
<dbReference type="GO" id="GO:0045735">
    <property type="term" value="F:nutrient reservoir activity"/>
    <property type="evidence" value="ECO:0007669"/>
    <property type="project" value="UniProtKB-KW"/>
</dbReference>
<dbReference type="GO" id="GO:0004620">
    <property type="term" value="F:phospholipase activity"/>
    <property type="evidence" value="ECO:0000318"/>
    <property type="project" value="GO_Central"/>
</dbReference>
<dbReference type="GO" id="GO:0006952">
    <property type="term" value="P:defense response"/>
    <property type="evidence" value="ECO:0007669"/>
    <property type="project" value="UniProtKB-KW"/>
</dbReference>
<dbReference type="GO" id="GO:0016042">
    <property type="term" value="P:lipid catabolic process"/>
    <property type="evidence" value="ECO:0007669"/>
    <property type="project" value="UniProtKB-KW"/>
</dbReference>
<dbReference type="Gene3D" id="3.40.1090.10">
    <property type="entry name" value="Cytosolic phospholipase A2 catalytic domain"/>
    <property type="match status" value="1"/>
</dbReference>
<dbReference type="InterPro" id="IPR016035">
    <property type="entry name" value="Acyl_Trfase/lysoPLipase"/>
</dbReference>
<dbReference type="InterPro" id="IPR002641">
    <property type="entry name" value="PNPLA_dom"/>
</dbReference>
<dbReference type="PANTHER" id="PTHR32176:SF85">
    <property type="entry name" value="PATATIN GROUP D-2"/>
    <property type="match status" value="1"/>
</dbReference>
<dbReference type="PANTHER" id="PTHR32176">
    <property type="entry name" value="XYLOSE ISOMERASE"/>
    <property type="match status" value="1"/>
</dbReference>
<dbReference type="Pfam" id="PF01734">
    <property type="entry name" value="Patatin"/>
    <property type="match status" value="1"/>
</dbReference>
<dbReference type="SUPFAM" id="SSF52151">
    <property type="entry name" value="FabD/lysophospholipase-like"/>
    <property type="match status" value="1"/>
</dbReference>
<dbReference type="PROSITE" id="PS51635">
    <property type="entry name" value="PNPLA"/>
    <property type="match status" value="1"/>
</dbReference>
<gene>
    <name type="primary">pat1-k1</name>
</gene>
<protein>
    <recommendedName>
        <fullName>Patatin-05</fullName>
        <ecNumber>3.1.1.-</ecNumber>
    </recommendedName>
    <alternativeName>
        <fullName>Patatin-1-Kuras 1</fullName>
    </alternativeName>
</protein>
<comment type="function">
    <text evidence="1">Probable lipolytic acyl hydrolase (LAH), an activity which is thought to be involved in the response of tubers to pathogens.</text>
</comment>
<comment type="subcellular location">
    <subcellularLocation>
        <location evidence="1">Vacuole</location>
    </subcellularLocation>
</comment>
<comment type="tissue specificity">
    <text evidence="4 5">Tuber.</text>
</comment>
<comment type="developmental stage">
    <text evidence="4">Accumulates progressively during tuber formation from stolon.</text>
</comment>
<comment type="domain">
    <text>The nitrogen atoms of the two glycine residues in the GGXR motif define the oxyanion hole, and stabilize the oxyanion that forms during the nucleophilic attack by the catalytic serine during substrate cleavage.</text>
</comment>
<comment type="miscellaneous">
    <text>Patatin have a dual role as a somatic storage protein and as an enzyme involved in host resistance.</text>
</comment>
<comment type="similarity">
    <text evidence="6">Belongs to the patatin family.</text>
</comment>
<name>PAT05_SOLTU</name>
<organism>
    <name type="scientific">Solanum tuberosum</name>
    <name type="common">Potato</name>
    <dbReference type="NCBI Taxonomy" id="4113"/>
    <lineage>
        <taxon>Eukaryota</taxon>
        <taxon>Viridiplantae</taxon>
        <taxon>Streptophyta</taxon>
        <taxon>Embryophyta</taxon>
        <taxon>Tracheophyta</taxon>
        <taxon>Spermatophyta</taxon>
        <taxon>Magnoliopsida</taxon>
        <taxon>eudicotyledons</taxon>
        <taxon>Gunneridae</taxon>
        <taxon>Pentapetalae</taxon>
        <taxon>asterids</taxon>
        <taxon>lamiids</taxon>
        <taxon>Solanales</taxon>
        <taxon>Solanaceae</taxon>
        <taxon>Solanoideae</taxon>
        <taxon>Solaneae</taxon>
        <taxon>Solanum</taxon>
    </lineage>
</organism>
<evidence type="ECO:0000250" key="1"/>
<evidence type="ECO:0000255" key="2"/>
<evidence type="ECO:0000255" key="3">
    <source>
        <dbReference type="PROSITE-ProRule" id="PRU01161"/>
    </source>
</evidence>
<evidence type="ECO:0000269" key="4">
    <source>
    </source>
</evidence>
<evidence type="ECO:0000269" key="5">
    <source>
    </source>
</evidence>
<evidence type="ECO:0000305" key="6"/>